<dbReference type="EC" id="4.2.3.-" evidence="3"/>
<dbReference type="EMBL" id="LC378440">
    <property type="protein sequence ID" value="BBD74532.1"/>
    <property type="molecule type" value="mRNA"/>
</dbReference>
<dbReference type="SMR" id="A0A348B794"/>
<dbReference type="GO" id="GO:0016838">
    <property type="term" value="F:carbon-oxygen lyase activity, acting on phosphates"/>
    <property type="evidence" value="ECO:0007669"/>
    <property type="project" value="InterPro"/>
</dbReference>
<dbReference type="GO" id="GO:0046872">
    <property type="term" value="F:metal ion binding"/>
    <property type="evidence" value="ECO:0007669"/>
    <property type="project" value="UniProtKB-KW"/>
</dbReference>
<dbReference type="Gene3D" id="1.10.600.10">
    <property type="entry name" value="Farnesyl Diphosphate Synthase"/>
    <property type="match status" value="1"/>
</dbReference>
<dbReference type="InterPro" id="IPR008949">
    <property type="entry name" value="Isoprenoid_synthase_dom_sf"/>
</dbReference>
<dbReference type="InterPro" id="IPR024652">
    <property type="entry name" value="Trichodiene_synth"/>
</dbReference>
<dbReference type="Pfam" id="PF06330">
    <property type="entry name" value="TRI5"/>
    <property type="match status" value="1"/>
</dbReference>
<dbReference type="SUPFAM" id="SSF48576">
    <property type="entry name" value="Terpenoid synthases"/>
    <property type="match status" value="1"/>
</dbReference>
<feature type="chain" id="PRO_0000451376" description="Terpene synthase 29">
    <location>
        <begin position="1"/>
        <end position="340"/>
    </location>
</feature>
<feature type="short sequence motif" description="DDXXXXD motif" evidence="6">
    <location>
        <begin position="132"/>
        <end position="138"/>
    </location>
</feature>
<feature type="short sequence motif" description="NSE/DTE motif" evidence="6">
    <location>
        <begin position="257"/>
        <end position="265"/>
    </location>
</feature>
<feature type="binding site" evidence="2">
    <location>
        <position position="132"/>
    </location>
    <ligand>
        <name>Mg(2+)</name>
        <dbReference type="ChEBI" id="CHEBI:18420"/>
        <label>1</label>
    </ligand>
</feature>
<feature type="binding site" evidence="2">
    <location>
        <position position="197"/>
    </location>
    <ligand>
        <name>Mg(2+)</name>
        <dbReference type="ChEBI" id="CHEBI:18420"/>
        <label>1</label>
    </ligand>
</feature>
<feature type="binding site" evidence="2">
    <location>
        <position position="257"/>
    </location>
    <ligand>
        <name>Mg(2+)</name>
        <dbReference type="ChEBI" id="CHEBI:18420"/>
        <label>2</label>
    </ligand>
</feature>
<feature type="binding site" evidence="2">
    <location>
        <position position="261"/>
    </location>
    <ligand>
        <name>Mg(2+)</name>
        <dbReference type="ChEBI" id="CHEBI:18420"/>
        <label>2</label>
    </ligand>
</feature>
<feature type="binding site" evidence="2">
    <location>
        <position position="265"/>
    </location>
    <ligand>
        <name>Mg(2+)</name>
        <dbReference type="ChEBI" id="CHEBI:18420"/>
        <label>2</label>
    </ligand>
</feature>
<accession>A0A348B794</accession>
<gene>
    <name evidence="4" type="primary">STS-29</name>
</gene>
<protein>
    <recommendedName>
        <fullName evidence="4">Terpene synthase 29</fullName>
        <ecNumber evidence="3">4.2.3.-</ecNumber>
    </recommendedName>
    <alternativeName>
        <fullName evidence="4">Terpene cyclase 29</fullName>
    </alternativeName>
</protein>
<organism>
    <name type="scientific">Postia placenta (strain ATCC 44394 / Madison 698-R)</name>
    <name type="common">Brown rot fungus</name>
    <name type="synonym">Poria monticola</name>
    <dbReference type="NCBI Taxonomy" id="561896"/>
    <lineage>
        <taxon>Eukaryota</taxon>
        <taxon>Fungi</taxon>
        <taxon>Dikarya</taxon>
        <taxon>Basidiomycota</taxon>
        <taxon>Agaricomycotina</taxon>
        <taxon>Agaricomycetes</taxon>
        <taxon>Polyporales</taxon>
        <taxon>Adustoporiaceae</taxon>
        <taxon>Rhodonia</taxon>
    </lineage>
</organism>
<reference key="1">
    <citation type="journal article" date="2018" name="Microb. Biotechnol.">
        <title>Insight into metabolic diversity of the brown-rot basidiomycete Postia placenta responsible for sesquiterpene biosynthesis: semi-comprehensive screening of cytochrome P450 monooxygenase involved in protoilludene metabolism.</title>
        <authorList>
            <person name="Ichinose H."/>
            <person name="Kitaoka T."/>
        </authorList>
    </citation>
    <scope>NUCLEOTIDE SEQUENCE [MRNA]</scope>
    <scope>FUNCTION</scope>
    <scope>DOMAIN</scope>
    <scope>CATALYTIC ACTIVITY</scope>
    <source>
        <strain>ATCC 44394 / Madison 698-R</strain>
    </source>
</reference>
<sequence>MSAVTQVVETAIGCVIPSCIEFGSSMRIATSLGSPSVTQSPCVNRDVEDIARTARESIRFFLAELSIECVPYTQDPALEAQVASATRCWPDRERLAPHIRTGIVIAATAYAHNSLATRTLIALYTAIGVALDEPDILESANAIGFHHSLCTETSERPSAILDEWRRILARMWDHFPRFGASCILTSTLQFLNMTMLENETKGKVLNRTAMPFVEYRRMTDGFPEVYTAFIWEKGRFPDVQVYMQAIPNAMRFINFGNDILSFYKEEAAGETGTYIHDRARLTGLSSVETLREVVEETVSAWRQVCEILGEGIARDAWNSFVRGYVTFHVHNPRYRLSELL</sequence>
<evidence type="ECO:0000250" key="1">
    <source>
        <dbReference type="UniProtKB" id="I3ZNU9"/>
    </source>
</evidence>
<evidence type="ECO:0000250" key="2">
    <source>
        <dbReference type="UniProtKB" id="P13513"/>
    </source>
</evidence>
<evidence type="ECO:0000269" key="3">
    <source>
    </source>
</evidence>
<evidence type="ECO:0000303" key="4">
    <source>
    </source>
</evidence>
<evidence type="ECO:0000305" key="5"/>
<evidence type="ECO:0000305" key="6">
    <source>
    </source>
</evidence>
<proteinExistence type="evidence at protein level"/>
<comment type="function">
    <text evidence="3">Terpene cyclase that catalyzes the cyclization of farnesyl diphosphate (FPP) to a single major terpene scaffold whose chemical structure is still unknown.</text>
</comment>
<comment type="cofactor">
    <cofactor evidence="1">
        <name>Mg(2+)</name>
        <dbReference type="ChEBI" id="CHEBI:18420"/>
    </cofactor>
</comment>
<comment type="domain">
    <text evidence="6">The conserved DDXXD and NSE/DTE motifs are important for the catalytic activity, presumably through binding to Mg(2+).</text>
</comment>
<comment type="similarity">
    <text evidence="5">Belongs to the trichodiene synthase family.</text>
</comment>
<keyword id="KW-0456">Lyase</keyword>
<keyword id="KW-0460">Magnesium</keyword>
<keyword id="KW-0479">Metal-binding</keyword>
<name>STS29_POSPM</name>